<protein>
    <recommendedName>
        <fullName evidence="1">GMP reductase</fullName>
        <ecNumber evidence="1">1.7.1.7</ecNumber>
    </recommendedName>
    <alternativeName>
        <fullName evidence="1">Guanosine 5'-monophosphate oxidoreductase</fullName>
        <shortName evidence="1">Guanosine monophosphate reductase</shortName>
    </alternativeName>
</protein>
<feature type="chain" id="PRO_0000093765" description="GMP reductase">
    <location>
        <begin position="1"/>
        <end position="325"/>
    </location>
</feature>
<feature type="active site" description="Thioimidate intermediate" evidence="1">
    <location>
        <position position="174"/>
    </location>
</feature>
<feature type="binding site" evidence="1">
    <location>
        <begin position="203"/>
        <end position="226"/>
    </location>
    <ligand>
        <name>NADP(+)</name>
        <dbReference type="ChEBI" id="CHEBI:58349"/>
    </ligand>
</feature>
<organism>
    <name type="scientific">Staphylococcus aureus (strain MSSA476)</name>
    <dbReference type="NCBI Taxonomy" id="282459"/>
    <lineage>
        <taxon>Bacteria</taxon>
        <taxon>Bacillati</taxon>
        <taxon>Bacillota</taxon>
        <taxon>Bacilli</taxon>
        <taxon>Bacillales</taxon>
        <taxon>Staphylococcaceae</taxon>
        <taxon>Staphylococcus</taxon>
    </lineage>
</organism>
<keyword id="KW-0521">NADP</keyword>
<keyword id="KW-0560">Oxidoreductase</keyword>
<sequence length="325" mass="36129">MKIFDYEDIQLIPNKCIVESRSECDTTIQFGPKKFKLPVVPANMQTVMNEKLAKWFAENDYFYIMHRFDEEARIPFIKHMQNSGLFASISVGVKKAEFDFIEKLAQEKLIPEYITIDIAHGHSDSVINMIKHIKNHIPDSFVIAGNVGTPEGVRELENAGADATKVGIGPGRVCITKIKTGFGTGGWQLAALNICSKAARKPLIADGGIRTHGDIAKSIRFGASMVMIGSLFAAHEESPGETVELDGKQYKEYFGSASEFQKGEHKNVEGKKMFVEHKGSLMDTLKEMQQDLQSSISYAGGKDLKSLRTVDYVIVRNSIFNGDRD</sequence>
<gene>
    <name evidence="1" type="primary">guaC</name>
    <name type="ordered locus">SAS1277</name>
</gene>
<proteinExistence type="inferred from homology"/>
<accession>Q6G9M1</accession>
<reference key="1">
    <citation type="journal article" date="2004" name="Proc. Natl. Acad. Sci. U.S.A.">
        <title>Complete genomes of two clinical Staphylococcus aureus strains: evidence for the rapid evolution of virulence and drug resistance.</title>
        <authorList>
            <person name="Holden M.T.G."/>
            <person name="Feil E.J."/>
            <person name="Lindsay J.A."/>
            <person name="Peacock S.J."/>
            <person name="Day N.P.J."/>
            <person name="Enright M.C."/>
            <person name="Foster T.J."/>
            <person name="Moore C.E."/>
            <person name="Hurst L."/>
            <person name="Atkin R."/>
            <person name="Barron A."/>
            <person name="Bason N."/>
            <person name="Bentley S.D."/>
            <person name="Chillingworth C."/>
            <person name="Chillingworth T."/>
            <person name="Churcher C."/>
            <person name="Clark L."/>
            <person name="Corton C."/>
            <person name="Cronin A."/>
            <person name="Doggett J."/>
            <person name="Dowd L."/>
            <person name="Feltwell T."/>
            <person name="Hance Z."/>
            <person name="Harris B."/>
            <person name="Hauser H."/>
            <person name="Holroyd S."/>
            <person name="Jagels K."/>
            <person name="James K.D."/>
            <person name="Lennard N."/>
            <person name="Line A."/>
            <person name="Mayes R."/>
            <person name="Moule S."/>
            <person name="Mungall K."/>
            <person name="Ormond D."/>
            <person name="Quail M.A."/>
            <person name="Rabbinowitsch E."/>
            <person name="Rutherford K.M."/>
            <person name="Sanders M."/>
            <person name="Sharp S."/>
            <person name="Simmonds M."/>
            <person name="Stevens K."/>
            <person name="Whitehead S."/>
            <person name="Barrell B.G."/>
            <person name="Spratt B.G."/>
            <person name="Parkhill J."/>
        </authorList>
    </citation>
    <scope>NUCLEOTIDE SEQUENCE [LARGE SCALE GENOMIC DNA]</scope>
    <source>
        <strain>MSSA476</strain>
    </source>
</reference>
<evidence type="ECO:0000255" key="1">
    <source>
        <dbReference type="HAMAP-Rule" id="MF_01511"/>
    </source>
</evidence>
<name>GUAC_STAAS</name>
<dbReference type="EC" id="1.7.1.7" evidence="1"/>
<dbReference type="EMBL" id="BX571857">
    <property type="protein sequence ID" value="CAG43055.1"/>
    <property type="molecule type" value="Genomic_DNA"/>
</dbReference>
<dbReference type="RefSeq" id="WP_000688122.1">
    <property type="nucleotide sequence ID" value="NC_002953.3"/>
</dbReference>
<dbReference type="SMR" id="Q6G9M1"/>
<dbReference type="KEGG" id="sas:SAS1277"/>
<dbReference type="HOGENOM" id="CLU_022552_5_0_9"/>
<dbReference type="GO" id="GO:0005829">
    <property type="term" value="C:cytosol"/>
    <property type="evidence" value="ECO:0007669"/>
    <property type="project" value="TreeGrafter"/>
</dbReference>
<dbReference type="GO" id="GO:1902560">
    <property type="term" value="C:GMP reductase complex"/>
    <property type="evidence" value="ECO:0007669"/>
    <property type="project" value="InterPro"/>
</dbReference>
<dbReference type="GO" id="GO:0003920">
    <property type="term" value="F:GMP reductase activity"/>
    <property type="evidence" value="ECO:0007669"/>
    <property type="project" value="UniProtKB-UniRule"/>
</dbReference>
<dbReference type="GO" id="GO:0006163">
    <property type="term" value="P:purine nucleotide metabolic process"/>
    <property type="evidence" value="ECO:0007669"/>
    <property type="project" value="UniProtKB-UniRule"/>
</dbReference>
<dbReference type="CDD" id="cd00381">
    <property type="entry name" value="IMPDH"/>
    <property type="match status" value="1"/>
</dbReference>
<dbReference type="FunFam" id="3.20.20.70:FF:000079">
    <property type="entry name" value="GMP reductase"/>
    <property type="match status" value="1"/>
</dbReference>
<dbReference type="Gene3D" id="3.20.20.70">
    <property type="entry name" value="Aldolase class I"/>
    <property type="match status" value="1"/>
</dbReference>
<dbReference type="HAMAP" id="MF_01511">
    <property type="entry name" value="GMP_reduct_type2"/>
    <property type="match status" value="1"/>
</dbReference>
<dbReference type="InterPro" id="IPR013785">
    <property type="entry name" value="Aldolase_TIM"/>
</dbReference>
<dbReference type="InterPro" id="IPR050139">
    <property type="entry name" value="GMP_reductase"/>
</dbReference>
<dbReference type="InterPro" id="IPR005994">
    <property type="entry name" value="GuaC_type_2"/>
</dbReference>
<dbReference type="InterPro" id="IPR015875">
    <property type="entry name" value="IMP_DH/GMP_Rdtase_CS"/>
</dbReference>
<dbReference type="InterPro" id="IPR001093">
    <property type="entry name" value="IMP_DH_GMPRt"/>
</dbReference>
<dbReference type="NCBIfam" id="TIGR01306">
    <property type="entry name" value="GMP_reduct_2"/>
    <property type="match status" value="1"/>
</dbReference>
<dbReference type="NCBIfam" id="NF003966">
    <property type="entry name" value="PRK05458.1"/>
    <property type="match status" value="1"/>
</dbReference>
<dbReference type="PANTHER" id="PTHR43170">
    <property type="entry name" value="GMP REDUCTASE"/>
    <property type="match status" value="1"/>
</dbReference>
<dbReference type="PANTHER" id="PTHR43170:SF5">
    <property type="entry name" value="GMP REDUCTASE"/>
    <property type="match status" value="1"/>
</dbReference>
<dbReference type="Pfam" id="PF00478">
    <property type="entry name" value="IMPDH"/>
    <property type="match status" value="1"/>
</dbReference>
<dbReference type="PIRSF" id="PIRSF036500">
    <property type="entry name" value="GMP_red_Firmic"/>
    <property type="match status" value="1"/>
</dbReference>
<dbReference type="SMART" id="SM01240">
    <property type="entry name" value="IMPDH"/>
    <property type="match status" value="1"/>
</dbReference>
<dbReference type="SUPFAM" id="SSF51412">
    <property type="entry name" value="Inosine monophosphate dehydrogenase (IMPDH)"/>
    <property type="match status" value="1"/>
</dbReference>
<dbReference type="PROSITE" id="PS00487">
    <property type="entry name" value="IMP_DH_GMP_RED"/>
    <property type="match status" value="1"/>
</dbReference>
<comment type="function">
    <text evidence="1">Catalyzes the irreversible NADPH-dependent deamination of GMP to IMP. It functions in the conversion of nucleobase, nucleoside and nucleotide derivatives of G to A nucleotides, and in maintaining the intracellular balance of A and G nucleotides.</text>
</comment>
<comment type="catalytic activity">
    <reaction evidence="1">
        <text>IMP + NH4(+) + NADP(+) = GMP + NADPH + 2 H(+)</text>
        <dbReference type="Rhea" id="RHEA:17185"/>
        <dbReference type="ChEBI" id="CHEBI:15378"/>
        <dbReference type="ChEBI" id="CHEBI:28938"/>
        <dbReference type="ChEBI" id="CHEBI:57783"/>
        <dbReference type="ChEBI" id="CHEBI:58053"/>
        <dbReference type="ChEBI" id="CHEBI:58115"/>
        <dbReference type="ChEBI" id="CHEBI:58349"/>
        <dbReference type="EC" id="1.7.1.7"/>
    </reaction>
</comment>
<comment type="similarity">
    <text evidence="1">Belongs to the IMPDH/GMPR family. GuaC type 2 subfamily.</text>
</comment>